<evidence type="ECO:0000255" key="1">
    <source>
        <dbReference type="HAMAP-Rule" id="MF_00127"/>
    </source>
</evidence>
<accession>B0JRF1</accession>
<feature type="chain" id="PRO_1000076277" description="Histidine--tRNA ligase">
    <location>
        <begin position="1"/>
        <end position="426"/>
    </location>
</feature>
<protein>
    <recommendedName>
        <fullName evidence="1">Histidine--tRNA ligase</fullName>
        <ecNumber evidence="1">6.1.1.21</ecNumber>
    </recommendedName>
    <alternativeName>
        <fullName evidence="1">Histidyl-tRNA synthetase</fullName>
        <shortName evidence="1">HisRS</shortName>
    </alternativeName>
</protein>
<keyword id="KW-0030">Aminoacyl-tRNA synthetase</keyword>
<keyword id="KW-0067">ATP-binding</keyword>
<keyword id="KW-0963">Cytoplasm</keyword>
<keyword id="KW-0436">Ligase</keyword>
<keyword id="KW-0547">Nucleotide-binding</keyword>
<keyword id="KW-0648">Protein biosynthesis</keyword>
<comment type="catalytic activity">
    <reaction evidence="1">
        <text>tRNA(His) + L-histidine + ATP = L-histidyl-tRNA(His) + AMP + diphosphate + H(+)</text>
        <dbReference type="Rhea" id="RHEA:17313"/>
        <dbReference type="Rhea" id="RHEA-COMP:9665"/>
        <dbReference type="Rhea" id="RHEA-COMP:9689"/>
        <dbReference type="ChEBI" id="CHEBI:15378"/>
        <dbReference type="ChEBI" id="CHEBI:30616"/>
        <dbReference type="ChEBI" id="CHEBI:33019"/>
        <dbReference type="ChEBI" id="CHEBI:57595"/>
        <dbReference type="ChEBI" id="CHEBI:78442"/>
        <dbReference type="ChEBI" id="CHEBI:78527"/>
        <dbReference type="ChEBI" id="CHEBI:456215"/>
        <dbReference type="EC" id="6.1.1.21"/>
    </reaction>
</comment>
<comment type="subunit">
    <text evidence="1">Homodimer.</text>
</comment>
<comment type="subcellular location">
    <subcellularLocation>
        <location evidence="1">Cytoplasm</location>
    </subcellularLocation>
</comment>
<comment type="similarity">
    <text evidence="1">Belongs to the class-II aminoacyl-tRNA synthetase family.</text>
</comment>
<name>SYH_MICAN</name>
<proteinExistence type="inferred from homology"/>
<reference key="1">
    <citation type="journal article" date="2007" name="DNA Res.">
        <title>Complete genomic structure of the bloom-forming toxic cyanobacterium Microcystis aeruginosa NIES-843.</title>
        <authorList>
            <person name="Kaneko T."/>
            <person name="Nakajima N."/>
            <person name="Okamoto S."/>
            <person name="Suzuki I."/>
            <person name="Tanabe Y."/>
            <person name="Tamaoki M."/>
            <person name="Nakamura Y."/>
            <person name="Kasai F."/>
            <person name="Watanabe A."/>
            <person name="Kawashima K."/>
            <person name="Kishida Y."/>
            <person name="Ono A."/>
            <person name="Shimizu Y."/>
            <person name="Takahashi C."/>
            <person name="Minami C."/>
            <person name="Fujishiro T."/>
            <person name="Kohara M."/>
            <person name="Katoh M."/>
            <person name="Nakazaki N."/>
            <person name="Nakayama S."/>
            <person name="Yamada M."/>
            <person name="Tabata S."/>
            <person name="Watanabe M.M."/>
        </authorList>
    </citation>
    <scope>NUCLEOTIDE SEQUENCE [LARGE SCALE GENOMIC DNA]</scope>
    <source>
        <strain>NIES-843 / IAM M-247</strain>
    </source>
</reference>
<dbReference type="EC" id="6.1.1.21" evidence="1"/>
<dbReference type="EMBL" id="AP009552">
    <property type="protein sequence ID" value="BAF99995.1"/>
    <property type="molecule type" value="Genomic_DNA"/>
</dbReference>
<dbReference type="RefSeq" id="WP_012263904.1">
    <property type="nucleotide sequence ID" value="NC_010296.1"/>
</dbReference>
<dbReference type="SMR" id="B0JRF1"/>
<dbReference type="STRING" id="449447.MAE_01740"/>
<dbReference type="PaxDb" id="449447-MAE_01740"/>
<dbReference type="EnsemblBacteria" id="BAF99995">
    <property type="protein sequence ID" value="BAF99995"/>
    <property type="gene ID" value="MAE_01740"/>
</dbReference>
<dbReference type="KEGG" id="mar:MAE_01740"/>
<dbReference type="PATRIC" id="fig|449447.4.peg.157"/>
<dbReference type="eggNOG" id="COG0124">
    <property type="taxonomic scope" value="Bacteria"/>
</dbReference>
<dbReference type="HOGENOM" id="CLU_025113_1_1_3"/>
<dbReference type="BioCyc" id="MAER449447:MAE_RS00785-MONOMER"/>
<dbReference type="Proteomes" id="UP000001510">
    <property type="component" value="Chromosome"/>
</dbReference>
<dbReference type="GO" id="GO:0005737">
    <property type="term" value="C:cytoplasm"/>
    <property type="evidence" value="ECO:0007669"/>
    <property type="project" value="UniProtKB-SubCell"/>
</dbReference>
<dbReference type="GO" id="GO:0005524">
    <property type="term" value="F:ATP binding"/>
    <property type="evidence" value="ECO:0007669"/>
    <property type="project" value="UniProtKB-UniRule"/>
</dbReference>
<dbReference type="GO" id="GO:0004821">
    <property type="term" value="F:histidine-tRNA ligase activity"/>
    <property type="evidence" value="ECO:0007669"/>
    <property type="project" value="UniProtKB-UniRule"/>
</dbReference>
<dbReference type="GO" id="GO:0006427">
    <property type="term" value="P:histidyl-tRNA aminoacylation"/>
    <property type="evidence" value="ECO:0007669"/>
    <property type="project" value="UniProtKB-UniRule"/>
</dbReference>
<dbReference type="CDD" id="cd00773">
    <property type="entry name" value="HisRS-like_core"/>
    <property type="match status" value="1"/>
</dbReference>
<dbReference type="CDD" id="cd00859">
    <property type="entry name" value="HisRS_anticodon"/>
    <property type="match status" value="1"/>
</dbReference>
<dbReference type="FunFam" id="3.30.930.10:FF:000005">
    <property type="entry name" value="Histidine--tRNA ligase"/>
    <property type="match status" value="1"/>
</dbReference>
<dbReference type="Gene3D" id="3.40.50.800">
    <property type="entry name" value="Anticodon-binding domain"/>
    <property type="match status" value="1"/>
</dbReference>
<dbReference type="Gene3D" id="3.30.930.10">
    <property type="entry name" value="Bira Bifunctional Protein, Domain 2"/>
    <property type="match status" value="1"/>
</dbReference>
<dbReference type="HAMAP" id="MF_00127">
    <property type="entry name" value="His_tRNA_synth"/>
    <property type="match status" value="1"/>
</dbReference>
<dbReference type="InterPro" id="IPR006195">
    <property type="entry name" value="aa-tRNA-synth_II"/>
</dbReference>
<dbReference type="InterPro" id="IPR045864">
    <property type="entry name" value="aa-tRNA-synth_II/BPL/LPL"/>
</dbReference>
<dbReference type="InterPro" id="IPR004154">
    <property type="entry name" value="Anticodon-bd"/>
</dbReference>
<dbReference type="InterPro" id="IPR036621">
    <property type="entry name" value="Anticodon-bd_dom_sf"/>
</dbReference>
<dbReference type="InterPro" id="IPR015807">
    <property type="entry name" value="His-tRNA-ligase"/>
</dbReference>
<dbReference type="InterPro" id="IPR041715">
    <property type="entry name" value="HisRS-like_core"/>
</dbReference>
<dbReference type="InterPro" id="IPR004516">
    <property type="entry name" value="HisRS/HisZ"/>
</dbReference>
<dbReference type="InterPro" id="IPR033656">
    <property type="entry name" value="HisRS_anticodon"/>
</dbReference>
<dbReference type="NCBIfam" id="TIGR00442">
    <property type="entry name" value="hisS"/>
    <property type="match status" value="1"/>
</dbReference>
<dbReference type="PANTHER" id="PTHR43707:SF1">
    <property type="entry name" value="HISTIDINE--TRNA LIGASE, MITOCHONDRIAL-RELATED"/>
    <property type="match status" value="1"/>
</dbReference>
<dbReference type="PANTHER" id="PTHR43707">
    <property type="entry name" value="HISTIDYL-TRNA SYNTHETASE"/>
    <property type="match status" value="1"/>
</dbReference>
<dbReference type="Pfam" id="PF03129">
    <property type="entry name" value="HGTP_anticodon"/>
    <property type="match status" value="1"/>
</dbReference>
<dbReference type="Pfam" id="PF13393">
    <property type="entry name" value="tRNA-synt_His"/>
    <property type="match status" value="1"/>
</dbReference>
<dbReference type="PIRSF" id="PIRSF001549">
    <property type="entry name" value="His-tRNA_synth"/>
    <property type="match status" value="1"/>
</dbReference>
<dbReference type="SUPFAM" id="SSF52954">
    <property type="entry name" value="Class II aaRS ABD-related"/>
    <property type="match status" value="1"/>
</dbReference>
<dbReference type="SUPFAM" id="SSF55681">
    <property type="entry name" value="Class II aaRS and biotin synthetases"/>
    <property type="match status" value="1"/>
</dbReference>
<dbReference type="PROSITE" id="PS50862">
    <property type="entry name" value="AA_TRNA_LIGASE_II"/>
    <property type="match status" value="1"/>
</dbReference>
<gene>
    <name evidence="1" type="primary">hisS</name>
    <name type="ordered locus">MAE_01740</name>
</gene>
<sequence length="426" mass="47451">MGEIQAIRGTKDILPAEVGYWQWLEETASRILGTALYQEIRTPIFEQTQLFERGIGEATDVVGKEMYTFLDRRQRSLTLRPEGTAGVVRAYIEHKLQAAGGVQRLWYKGPMFRYERPQAGRQRQFHQIGVELLGSDDPRADVEVITLASEILKAVGLENLKLDINSLGNAQDRQNYRQALLDYLTPYKADLDADSQQRLEKNPLRILDSKDEKTKIICENVPSILEHLGSDSQKHFERVQSLLTDLGVIYNLNPCLVRGLDYYTHTAFEIQSDDLGAQATVCGGGRYDGLIAQLGGLDTPAVGWAIGLERLIILLQQKQSLSFLVPDFYLVSKGEKAEARSVVLAQQLRGLGFSVELDLSGSAFGKQFKRADRAKAVGCIILGDAEAENGTVQLKWMATQEQISLTQADLLTQAGELKAQISRHKS</sequence>
<organism>
    <name type="scientific">Microcystis aeruginosa (strain NIES-843 / IAM M-2473)</name>
    <dbReference type="NCBI Taxonomy" id="449447"/>
    <lineage>
        <taxon>Bacteria</taxon>
        <taxon>Bacillati</taxon>
        <taxon>Cyanobacteriota</taxon>
        <taxon>Cyanophyceae</taxon>
        <taxon>Oscillatoriophycideae</taxon>
        <taxon>Chroococcales</taxon>
        <taxon>Microcystaceae</taxon>
        <taxon>Microcystis</taxon>
    </lineage>
</organism>